<keyword id="KW-0378">Hydrolase</keyword>
<reference key="1">
    <citation type="journal article" date="2004" name="Nat. Genet.">
        <title>Comparison of genome degradation in Paratyphi A and Typhi, human-restricted serovars of Salmonella enterica that cause typhoid.</title>
        <authorList>
            <person name="McClelland M."/>
            <person name="Sanderson K.E."/>
            <person name="Clifton S.W."/>
            <person name="Latreille P."/>
            <person name="Porwollik S."/>
            <person name="Sabo A."/>
            <person name="Meyer R."/>
            <person name="Bieri T."/>
            <person name="Ozersky P."/>
            <person name="McLellan M."/>
            <person name="Harkins C.R."/>
            <person name="Wang C."/>
            <person name="Nguyen C."/>
            <person name="Berghoff A."/>
            <person name="Elliott G."/>
            <person name="Kohlberg S."/>
            <person name="Strong C."/>
            <person name="Du F."/>
            <person name="Carter J."/>
            <person name="Kremizki C."/>
            <person name="Layman D."/>
            <person name="Leonard S."/>
            <person name="Sun H."/>
            <person name="Fulton L."/>
            <person name="Nash W."/>
            <person name="Miner T."/>
            <person name="Minx P."/>
            <person name="Delehaunty K."/>
            <person name="Fronick C."/>
            <person name="Magrini V."/>
            <person name="Nhan M."/>
            <person name="Warren W."/>
            <person name="Florea L."/>
            <person name="Spieth J."/>
            <person name="Wilson R.K."/>
        </authorList>
    </citation>
    <scope>NUCLEOTIDE SEQUENCE [LARGE SCALE GENOMIC DNA]</scope>
    <source>
        <strain>ATCC 9150 / SARB42</strain>
    </source>
</reference>
<comment type="function">
    <text evidence="1">Hydrolyzes diadenosine 5',5'''-P1,P4-tetraphosphate to yield ADP.</text>
</comment>
<comment type="catalytic activity">
    <reaction evidence="1">
        <text>P(1),P(4)-bis(5'-adenosyl) tetraphosphate + H2O = 2 ADP + 2 H(+)</text>
        <dbReference type="Rhea" id="RHEA:24252"/>
        <dbReference type="ChEBI" id="CHEBI:15377"/>
        <dbReference type="ChEBI" id="CHEBI:15378"/>
        <dbReference type="ChEBI" id="CHEBI:58141"/>
        <dbReference type="ChEBI" id="CHEBI:456216"/>
        <dbReference type="EC" id="3.6.1.41"/>
    </reaction>
</comment>
<comment type="similarity">
    <text evidence="1">Belongs to the Ap4A hydrolase family.</text>
</comment>
<accession>Q5PDE1</accession>
<organism>
    <name type="scientific">Salmonella paratyphi A (strain ATCC 9150 / SARB42)</name>
    <dbReference type="NCBI Taxonomy" id="295319"/>
    <lineage>
        <taxon>Bacteria</taxon>
        <taxon>Pseudomonadati</taxon>
        <taxon>Pseudomonadota</taxon>
        <taxon>Gammaproteobacteria</taxon>
        <taxon>Enterobacterales</taxon>
        <taxon>Enterobacteriaceae</taxon>
        <taxon>Salmonella</taxon>
    </lineage>
</organism>
<proteinExistence type="inferred from homology"/>
<gene>
    <name evidence="1" type="primary">apaH</name>
    <name type="ordered locus">SPA0089</name>
</gene>
<dbReference type="EC" id="3.6.1.41" evidence="1"/>
<dbReference type="EMBL" id="CP000026">
    <property type="protein sequence ID" value="AAV76122.1"/>
    <property type="molecule type" value="Genomic_DNA"/>
</dbReference>
<dbReference type="RefSeq" id="WP_000257207.1">
    <property type="nucleotide sequence ID" value="NC_006511.1"/>
</dbReference>
<dbReference type="SMR" id="Q5PDE1"/>
<dbReference type="KEGG" id="spt:SPA0089"/>
<dbReference type="HOGENOM" id="CLU_056184_2_0_6"/>
<dbReference type="Proteomes" id="UP000008185">
    <property type="component" value="Chromosome"/>
</dbReference>
<dbReference type="GO" id="GO:0008803">
    <property type="term" value="F:bis(5'-nucleosyl)-tetraphosphatase (symmetrical) activity"/>
    <property type="evidence" value="ECO:0007669"/>
    <property type="project" value="UniProtKB-UniRule"/>
</dbReference>
<dbReference type="CDD" id="cd07422">
    <property type="entry name" value="MPP_ApaH"/>
    <property type="match status" value="1"/>
</dbReference>
<dbReference type="FunFam" id="3.60.21.10:FF:000013">
    <property type="entry name" value="Bis(5'-nucleosyl)-tetraphosphatase, symmetrical"/>
    <property type="match status" value="1"/>
</dbReference>
<dbReference type="Gene3D" id="3.60.21.10">
    <property type="match status" value="1"/>
</dbReference>
<dbReference type="HAMAP" id="MF_00199">
    <property type="entry name" value="ApaH"/>
    <property type="match status" value="1"/>
</dbReference>
<dbReference type="InterPro" id="IPR004617">
    <property type="entry name" value="ApaH"/>
</dbReference>
<dbReference type="InterPro" id="IPR004843">
    <property type="entry name" value="Calcineurin-like_PHP_ApaH"/>
</dbReference>
<dbReference type="InterPro" id="IPR029052">
    <property type="entry name" value="Metallo-depent_PP-like"/>
</dbReference>
<dbReference type="NCBIfam" id="TIGR00668">
    <property type="entry name" value="apaH"/>
    <property type="match status" value="1"/>
</dbReference>
<dbReference type="NCBIfam" id="NF001204">
    <property type="entry name" value="PRK00166.1"/>
    <property type="match status" value="1"/>
</dbReference>
<dbReference type="PANTHER" id="PTHR40942">
    <property type="match status" value="1"/>
</dbReference>
<dbReference type="PANTHER" id="PTHR40942:SF4">
    <property type="entry name" value="CYTOCHROME C5"/>
    <property type="match status" value="1"/>
</dbReference>
<dbReference type="Pfam" id="PF00149">
    <property type="entry name" value="Metallophos"/>
    <property type="match status" value="1"/>
</dbReference>
<dbReference type="PIRSF" id="PIRSF000903">
    <property type="entry name" value="B5n-ttraPtase_sm"/>
    <property type="match status" value="1"/>
</dbReference>
<dbReference type="SUPFAM" id="SSF56300">
    <property type="entry name" value="Metallo-dependent phosphatases"/>
    <property type="match status" value="1"/>
</dbReference>
<evidence type="ECO:0000255" key="1">
    <source>
        <dbReference type="HAMAP-Rule" id="MF_00199"/>
    </source>
</evidence>
<sequence length="282" mass="31461">MATYLIGDVHGCYDELIALLQQVEFMPDTDTLWLTGDLVARGPGSLDVLRYVKSLGNSVRLVLGNHDLHLLAVFAGISRNKPKDRLTPLLEAPDADELLNWLRRQPLLQVDEEKKLVMAHAGITPQWDLQTAKECARDVEAVLSSDSYPFFLDAMYGDMPNNWSPELSGLARLRFITNAFTRMRYCFPNGQLDMYSKASPENAPAPLKPWFAIPGPVSEAYSIAFGHWASLEGKGTPEGIYALDTGCCWGGELTCLRWEDKQYFVQPSNRQMDMGEGEAVNA</sequence>
<feature type="chain" id="PRO_1000012087" description="Bis(5'-nucleosyl)-tetraphosphatase, symmetrical">
    <location>
        <begin position="1"/>
        <end position="282"/>
    </location>
</feature>
<name>APAH_SALPA</name>
<protein>
    <recommendedName>
        <fullName evidence="1">Bis(5'-nucleosyl)-tetraphosphatase, symmetrical</fullName>
        <ecNumber evidence="1">3.6.1.41</ecNumber>
    </recommendedName>
    <alternativeName>
        <fullName evidence="1">Ap4A hydrolase</fullName>
    </alternativeName>
    <alternativeName>
        <fullName evidence="1">Diadenosine 5',5'''-P1,P4-tetraphosphate pyrophosphohydrolase</fullName>
    </alternativeName>
    <alternativeName>
        <fullName evidence="1">Diadenosine tetraphosphatase</fullName>
    </alternativeName>
</protein>